<gene>
    <name type="primary">bcrD</name>
</gene>
<organism>
    <name type="scientific">Thauera aromatica</name>
    <dbReference type="NCBI Taxonomy" id="59405"/>
    <lineage>
        <taxon>Bacteria</taxon>
        <taxon>Pseudomonadati</taxon>
        <taxon>Pseudomonadota</taxon>
        <taxon>Betaproteobacteria</taxon>
        <taxon>Rhodocyclales</taxon>
        <taxon>Zoogloeaceae</taxon>
        <taxon>Thauera</taxon>
    </lineage>
</organism>
<name>BCRD_THAAR</name>
<accession>O87877</accession>
<keyword id="KW-0004">4Fe-4S</keyword>
<keyword id="KW-0058">Aromatic hydrocarbons catabolism</keyword>
<keyword id="KW-0067">ATP-binding</keyword>
<keyword id="KW-0903">Direct protein sequencing</keyword>
<keyword id="KW-0408">Iron</keyword>
<keyword id="KW-0411">Iron-sulfur</keyword>
<keyword id="KW-0479">Metal-binding</keyword>
<keyword id="KW-0547">Nucleotide-binding</keyword>
<keyword id="KW-0560">Oxidoreductase</keyword>
<sequence length="282" mass="30157">MTITAGIDIGTGAVKTVLFRVEGDKTEWLAKRNDRIRQRDPFKLAEEAYNGLLEEAGLKASDVDYVATTGEGESLAFHTGHFYSMTTHARGAVYLNPEARAVLDIGALHGRAIRNDERGKVETYKMTSQCASGSGQFLENIARYLGIAQDEIGSLSTQADNPEVVSSICAVLAETDVINMVSRGISAPNILKGIHISMAGRLAKLLKSVGARDGVVLCTGGLALDEGLLKTLNESIQEQKMAVVAYNHPDSPYAGAIGAALWGAFRHEKLARLGQQQVAEAA</sequence>
<feature type="initiator methionine" description="Removed" evidence="4">
    <location>
        <position position="1"/>
    </location>
</feature>
<feature type="chain" id="PRO_0000350733" description="Benzoyl-CoA reductase subunit D">
    <location>
        <begin position="2"/>
        <end position="282"/>
    </location>
</feature>
<feature type="binding site" evidence="1">
    <location>
        <position position="130"/>
    </location>
    <ligand>
        <name>[4Fe-4S] cluster</name>
        <dbReference type="ChEBI" id="CHEBI:49883"/>
        <note>ligand shared with BcrA</note>
    </ligand>
</feature>
<feature type="binding site" evidence="1">
    <location>
        <position position="169"/>
    </location>
    <ligand>
        <name>[4Fe-4S] cluster</name>
        <dbReference type="ChEBI" id="CHEBI:49883"/>
        <note>ligand shared with BcrA</note>
    </ligand>
</feature>
<proteinExistence type="evidence at protein level"/>
<dbReference type="EC" id="1.3.7.8" evidence="2 3"/>
<dbReference type="EC" id="1.3.99.n1" evidence="2 3"/>
<dbReference type="EMBL" id="AJ224959">
    <property type="protein sequence ID" value="CAA12250.1"/>
    <property type="molecule type" value="Genomic_DNA"/>
</dbReference>
<dbReference type="SMR" id="O87877"/>
<dbReference type="KEGG" id="ag:CAA12250"/>
<dbReference type="BioCyc" id="MetaCyc:BCRDTHAUERA-MONOMER"/>
<dbReference type="SABIO-RK" id="O87877"/>
<dbReference type="GO" id="GO:0051539">
    <property type="term" value="F:4 iron, 4 sulfur cluster binding"/>
    <property type="evidence" value="ECO:0007669"/>
    <property type="project" value="UniProtKB-KW"/>
</dbReference>
<dbReference type="GO" id="GO:0005524">
    <property type="term" value="F:ATP binding"/>
    <property type="evidence" value="ECO:0007669"/>
    <property type="project" value="UniProtKB-KW"/>
</dbReference>
<dbReference type="GO" id="GO:0018522">
    <property type="term" value="F:benzoyl-CoA reductase activity"/>
    <property type="evidence" value="ECO:0007669"/>
    <property type="project" value="UniProtKB-EC"/>
</dbReference>
<dbReference type="GO" id="GO:0046872">
    <property type="term" value="F:metal ion binding"/>
    <property type="evidence" value="ECO:0007669"/>
    <property type="project" value="UniProtKB-KW"/>
</dbReference>
<dbReference type="GO" id="GO:0009056">
    <property type="term" value="P:catabolic process"/>
    <property type="evidence" value="ECO:0007669"/>
    <property type="project" value="UniProtKB-KW"/>
</dbReference>
<dbReference type="CDD" id="cd24105">
    <property type="entry name" value="ASKHA_NBD_benz_CoA_BcrD_BadG"/>
    <property type="match status" value="1"/>
</dbReference>
<dbReference type="Gene3D" id="3.30.420.40">
    <property type="match status" value="2"/>
</dbReference>
<dbReference type="InterPro" id="IPR002731">
    <property type="entry name" value="ATPase_BadF"/>
</dbReference>
<dbReference type="InterPro" id="IPR043129">
    <property type="entry name" value="ATPase_NBD"/>
</dbReference>
<dbReference type="InterPro" id="IPR011956">
    <property type="entry name" value="Benzoyl_CoA_Rdtase_D"/>
</dbReference>
<dbReference type="InterPro" id="IPR008275">
    <property type="entry name" value="CoA_E_activase_dom"/>
</dbReference>
<dbReference type="InterPro" id="IPR051805">
    <property type="entry name" value="Dehydratase_Activator_Redct"/>
</dbReference>
<dbReference type="NCBIfam" id="TIGR02261">
    <property type="entry name" value="benz_CoA_red_D"/>
    <property type="match status" value="1"/>
</dbReference>
<dbReference type="NCBIfam" id="TIGR00241">
    <property type="entry name" value="CoA_E_activ"/>
    <property type="match status" value="1"/>
</dbReference>
<dbReference type="PANTHER" id="PTHR32329:SF2">
    <property type="entry name" value="BIFUNCTIONAL PROTEIN [INCLUDES 2-HYDROXYACYL-COA DEHYDRATASE (N-TER) AND ITS ACTIVATOR DOMAIN (C_TERM)"/>
    <property type="match status" value="1"/>
</dbReference>
<dbReference type="PANTHER" id="PTHR32329">
    <property type="entry name" value="BIFUNCTIONAL PROTEIN [INCLUDES 2-HYDROXYACYL-COA DEHYDRATASE (N-TER) AND ITS ACTIVATOR DOMAIN (C_TERM)-RELATED"/>
    <property type="match status" value="1"/>
</dbReference>
<dbReference type="Pfam" id="PF01869">
    <property type="entry name" value="BcrAD_BadFG"/>
    <property type="match status" value="1"/>
</dbReference>
<dbReference type="SUPFAM" id="SSF53067">
    <property type="entry name" value="Actin-like ATPase domain"/>
    <property type="match status" value="1"/>
</dbReference>
<reference key="1">
    <citation type="journal article" date="1998" name="Eur. J. Biochem.">
        <title>Genes coding for the benzoyl-CoA pathway of anaerobic aromatic metabolism in the bacterium Thauera aromatica.</title>
        <authorList>
            <person name="Breese K."/>
            <person name="Boll M."/>
            <person name="Alt-Moerbe J."/>
            <person name="Schaegger H."/>
            <person name="Fuchs G."/>
        </authorList>
    </citation>
    <scope>NUCLEOTIDE SEQUENCE [GENOMIC DNA]</scope>
    <scope>PROTEIN SEQUENCE OF 2-14</scope>
    <scope>SUBUNIT</scope>
    <source>
        <strain>DSM 6984 / CIP 107765 / K172</strain>
    </source>
</reference>
<reference key="2">
    <citation type="journal article" date="1995" name="Eur. J. Biochem.">
        <title>Benzoyl-coenzyme A reductase (dearomatizing), a key enzyme of anaerobic aromatic metabolism. ATP dependence of the reaction, purification and some properties of the enzyme from Thauera aromatica strain K172.</title>
        <authorList>
            <person name="Boll M."/>
            <person name="Fuchs G."/>
        </authorList>
    </citation>
    <scope>FUNCTION</scope>
    <scope>CATALYTIC ACTIVITY</scope>
    <scope>SUBSTRATE SPECIFICITY</scope>
    <scope>BIOPHYSICOCHEMICAL PROPERTIES</scope>
    <scope>COFACTOR</scope>
    <source>
        <strain>DSM 6984 / CIP 107765 / K172</strain>
    </source>
</reference>
<reference key="3">
    <citation type="journal article" date="2001" name="J. Bacteriol.">
        <title>Anaerobic metabolism of 3-hydroxybenzoate by the denitrifying bacterium Thauera aromatica.</title>
        <authorList>
            <person name="Laempe D."/>
            <person name="Jahn M."/>
            <person name="Breese K."/>
            <person name="Schaegger H."/>
            <person name="Fuchs G."/>
        </authorList>
    </citation>
    <scope>CATALYTIC ACTIVITY</scope>
    <scope>BIOPHYSICOCHEMICAL PROPERTIES</scope>
    <source>
        <strain>DSM 6984 / CIP 107765 / K172</strain>
    </source>
</reference>
<evidence type="ECO:0000255" key="1"/>
<evidence type="ECO:0000269" key="2">
    <source>
    </source>
</evidence>
<evidence type="ECO:0000269" key="3">
    <source>
    </source>
</evidence>
<evidence type="ECO:0000269" key="4">
    <source>
    </source>
</evidence>
<comment type="function">
    <text evidence="3">Catalyzes the anaerobic reduction of benzoyl-CoA and 3-hydroxybenzoyl-CoA to form cyclohexa-1,5-diene-1-carbonyl-CoA and 3-hydroxycyclohexa-1,5-diene-1-carbonyl-CoA, respectively. The enzyme also reduces other benzoyl-CoA analogs with small substituents at the aromatic ring.</text>
</comment>
<comment type="catalytic activity">
    <reaction evidence="2 3">
        <text>cyclohexa-1,5-diene-1-carbonyl-CoA + oxidized 2[4Fe-4S]-[ferredoxin] + 2 ADP + 2 phosphate = reduced 2[4Fe-4S]-[ferredoxin] + benzoyl-CoA + 2 ATP + 2 H2O</text>
        <dbReference type="Rhea" id="RHEA:30199"/>
        <dbReference type="Rhea" id="RHEA-COMP:10002"/>
        <dbReference type="Rhea" id="RHEA-COMP:10004"/>
        <dbReference type="ChEBI" id="CHEBI:15377"/>
        <dbReference type="ChEBI" id="CHEBI:30616"/>
        <dbReference type="ChEBI" id="CHEBI:33722"/>
        <dbReference type="ChEBI" id="CHEBI:33723"/>
        <dbReference type="ChEBI" id="CHEBI:43474"/>
        <dbReference type="ChEBI" id="CHEBI:57369"/>
        <dbReference type="ChEBI" id="CHEBI:57374"/>
        <dbReference type="ChEBI" id="CHEBI:456216"/>
        <dbReference type="EC" id="1.3.7.8"/>
    </reaction>
</comment>
<comment type="catalytic activity">
    <reaction evidence="2 3">
        <text>3-hydroxybenzoyl-CoA + AH2 + 2 ATP + 2 H2O = 3-hydroxycyclohexa-1,5-diene-1-carbonyl-CoA + A + 2 ADP + 2 phosphate + 2 H(+)</text>
        <dbReference type="Rhea" id="RHEA:25420"/>
        <dbReference type="ChEBI" id="CHEBI:13193"/>
        <dbReference type="ChEBI" id="CHEBI:15377"/>
        <dbReference type="ChEBI" id="CHEBI:15378"/>
        <dbReference type="ChEBI" id="CHEBI:17499"/>
        <dbReference type="ChEBI" id="CHEBI:30616"/>
        <dbReference type="ChEBI" id="CHEBI:43474"/>
        <dbReference type="ChEBI" id="CHEBI:57342"/>
        <dbReference type="ChEBI" id="CHEBI:58801"/>
        <dbReference type="ChEBI" id="CHEBI:456216"/>
        <dbReference type="EC" id="1.3.99.n1"/>
    </reaction>
</comment>
<comment type="cofactor">
    <cofactor evidence="3">
        <name>[4Fe-4S] cluster</name>
        <dbReference type="ChEBI" id="CHEBI:49883"/>
    </cofactor>
    <text evidence="3">The iron-sulfur cluster may be a [4Fe-4S] cluster.</text>
</comment>
<comment type="biophysicochemical properties">
    <kinetics>
        <KM evidence="2 3">15 uM for benzoyl-CoA</KM>
        <KM evidence="2 3">20 uM for 3-hydroxybenzoyl-CoA</KM>
        <KM evidence="2 3">600 uM for ATP</KM>
    </kinetics>
    <phDependence>
        <text evidence="2 3">Optimum pH is 7.2-7.5.</text>
    </phDependence>
</comment>
<comment type="subunit">
    <text evidence="4">Heterotetramer composed of A, B, C, and D subunits.</text>
</comment>
<protein>
    <recommendedName>
        <fullName>Benzoyl-CoA reductase subunit D</fullName>
        <ecNumber evidence="2 3">1.3.7.8</ecNumber>
    </recommendedName>
    <alternativeName>
        <fullName>3-hydroxybenzoyl-CoA reductase subunit delta</fullName>
        <ecNumber evidence="2 3">1.3.99.n1</ecNumber>
    </alternativeName>
</protein>